<comment type="function">
    <text evidence="5">Seems to link microtubules to dendritic lamellar body (DLB), a membranous organelle predominantly present in bulbous dendritic appendages of neurons linked by dendrodendritic gap junctions. May operate in the control of brain-specific organelle translocations.</text>
</comment>
<comment type="subunit">
    <text evidence="1">Interacts with CLASP1 and CLASP2. Binds preferentially to tyrosinated microtubules, and only marginally to detyrosinated microtubules.</text>
</comment>
<comment type="interaction">
    <interactant intactId="EBI-349416">
        <id>O55156</id>
    </interactant>
    <interactant intactId="EBI-913476">
        <id>Q7Z460</id>
        <label>CLASP1</label>
    </interactant>
    <organismsDiffer>true</organismsDiffer>
    <experiments>3</experiments>
</comment>
<comment type="interaction">
    <interactant intactId="EBI-349416">
        <id>O55156</id>
    </interactant>
    <interactant intactId="EBI-908322">
        <id>Q80TV8</id>
        <label>Clasp1</label>
    </interactant>
    <organismsDiffer>true</organismsDiffer>
    <experiments>3</experiments>
</comment>
<comment type="interaction">
    <interactant intactId="EBI-349416">
        <id>O55156</id>
    </interactant>
    <interactant intactId="EBI-913524">
        <id>O75122</id>
        <label>CLASP2</label>
    </interactant>
    <organismsDiffer>true</organismsDiffer>
    <experiments>3</experiments>
</comment>
<comment type="subcellular location">
    <subcellularLocation>
        <location evidence="5">Cytoplasm</location>
    </subcellularLocation>
    <subcellularLocation>
        <location evidence="5">Cytoplasm</location>
        <location evidence="5">Cytoskeleton</location>
    </subcellularLocation>
    <text evidence="1">Localizes preferentially to the ends of tyrosinated microtubules.</text>
</comment>
<comment type="tissue specificity">
    <text evidence="5">Brain-specific, expressed in the hippocampus, inferior olive, and piriform cortex and in the cerebellum (at protein level).</text>
</comment>
<dbReference type="EMBL" id="AJ000485">
    <property type="protein sequence ID" value="CAA04123.1"/>
    <property type="molecule type" value="mRNA"/>
</dbReference>
<dbReference type="PIR" id="T42734">
    <property type="entry name" value="T42734"/>
</dbReference>
<dbReference type="SMR" id="O55156"/>
<dbReference type="BioGRID" id="247936">
    <property type="interactions" value="2"/>
</dbReference>
<dbReference type="FunCoup" id="O55156">
    <property type="interactions" value="1781"/>
</dbReference>
<dbReference type="IntAct" id="O55156">
    <property type="interactions" value="6"/>
</dbReference>
<dbReference type="STRING" id="10116.ENSRNOP00000035734"/>
<dbReference type="GlyGen" id="O55156">
    <property type="glycosylation" value="1 site, 1 O-linked glycan (1 site)"/>
</dbReference>
<dbReference type="iPTMnet" id="O55156"/>
<dbReference type="PhosphoSitePlus" id="O55156"/>
<dbReference type="jPOST" id="O55156"/>
<dbReference type="PaxDb" id="10116-ENSRNOP00000035734"/>
<dbReference type="UCSC" id="RGD:62019">
    <property type="organism name" value="rat"/>
</dbReference>
<dbReference type="AGR" id="RGD:62019"/>
<dbReference type="RGD" id="62019">
    <property type="gene designation" value="Clip2"/>
</dbReference>
<dbReference type="eggNOG" id="KOG4568">
    <property type="taxonomic scope" value="Eukaryota"/>
</dbReference>
<dbReference type="InParanoid" id="O55156"/>
<dbReference type="PhylomeDB" id="O55156"/>
<dbReference type="PRO" id="PR:O55156"/>
<dbReference type="Proteomes" id="UP000002494">
    <property type="component" value="Unplaced"/>
</dbReference>
<dbReference type="GO" id="GO:0005938">
    <property type="term" value="C:cell cortex"/>
    <property type="evidence" value="ECO:0000318"/>
    <property type="project" value="GO_Central"/>
</dbReference>
<dbReference type="GO" id="GO:0005881">
    <property type="term" value="C:cytoplasmic microtubule"/>
    <property type="evidence" value="ECO:0000314"/>
    <property type="project" value="UniProtKB"/>
</dbReference>
<dbReference type="GO" id="GO:0030425">
    <property type="term" value="C:dendrite"/>
    <property type="evidence" value="ECO:0000304"/>
    <property type="project" value="UniProtKB"/>
</dbReference>
<dbReference type="GO" id="GO:1901588">
    <property type="term" value="C:dendritic microtubule"/>
    <property type="evidence" value="ECO:0000314"/>
    <property type="project" value="RGD"/>
</dbReference>
<dbReference type="GO" id="GO:0042599">
    <property type="term" value="C:lamellar body"/>
    <property type="evidence" value="ECO:0000314"/>
    <property type="project" value="RGD"/>
</dbReference>
<dbReference type="GO" id="GO:0015630">
    <property type="term" value="C:microtubule cytoskeleton"/>
    <property type="evidence" value="ECO:0000266"/>
    <property type="project" value="RGD"/>
</dbReference>
<dbReference type="GO" id="GO:0035371">
    <property type="term" value="C:microtubule plus-end"/>
    <property type="evidence" value="ECO:0000250"/>
    <property type="project" value="UniProtKB"/>
</dbReference>
<dbReference type="GO" id="GO:0005634">
    <property type="term" value="C:nucleus"/>
    <property type="evidence" value="ECO:0000318"/>
    <property type="project" value="GO_Central"/>
</dbReference>
<dbReference type="GO" id="GO:0008017">
    <property type="term" value="F:microtubule binding"/>
    <property type="evidence" value="ECO:0000266"/>
    <property type="project" value="RGD"/>
</dbReference>
<dbReference type="GO" id="GO:0051010">
    <property type="term" value="F:microtubule plus-end binding"/>
    <property type="evidence" value="ECO:0000314"/>
    <property type="project" value="UniProtKB"/>
</dbReference>
<dbReference type="GO" id="GO:0031122">
    <property type="term" value="P:cytoplasmic microtubule organization"/>
    <property type="evidence" value="ECO:0000318"/>
    <property type="project" value="GO_Central"/>
</dbReference>
<dbReference type="GO" id="GO:0007026">
    <property type="term" value="P:negative regulation of microtubule depolymerization"/>
    <property type="evidence" value="ECO:0000303"/>
    <property type="project" value="UniProtKB"/>
</dbReference>
<dbReference type="FunFam" id="2.30.30.190:FF:000002">
    <property type="entry name" value="CAP-Gly domain containing linker protein 1"/>
    <property type="match status" value="1"/>
</dbReference>
<dbReference type="FunFam" id="2.30.30.190:FF:000001">
    <property type="entry name" value="Putative CAP-Gly domain-containing linker protein 1"/>
    <property type="match status" value="1"/>
</dbReference>
<dbReference type="Gene3D" id="2.30.30.190">
    <property type="entry name" value="CAP Gly-rich-like domain"/>
    <property type="match status" value="2"/>
</dbReference>
<dbReference type="InterPro" id="IPR036859">
    <property type="entry name" value="CAP-Gly_dom_sf"/>
</dbReference>
<dbReference type="InterPro" id="IPR000938">
    <property type="entry name" value="CAP-Gly_domain"/>
</dbReference>
<dbReference type="PANTHER" id="PTHR18916:SF10">
    <property type="entry name" value="CAP-GLY DOMAIN-CONTAINING LINKER PROTEIN 2"/>
    <property type="match status" value="1"/>
</dbReference>
<dbReference type="PANTHER" id="PTHR18916">
    <property type="entry name" value="DYNACTIN 1-RELATED MICROTUBULE-BINDING"/>
    <property type="match status" value="1"/>
</dbReference>
<dbReference type="Pfam" id="PF01302">
    <property type="entry name" value="CAP_GLY"/>
    <property type="match status" value="2"/>
</dbReference>
<dbReference type="SMART" id="SM01052">
    <property type="entry name" value="CAP_GLY"/>
    <property type="match status" value="2"/>
</dbReference>
<dbReference type="SUPFAM" id="SSF74924">
    <property type="entry name" value="Cap-Gly domain"/>
    <property type="match status" value="2"/>
</dbReference>
<dbReference type="SUPFAM" id="SSF90257">
    <property type="entry name" value="Myosin rod fragments"/>
    <property type="match status" value="1"/>
</dbReference>
<dbReference type="PROSITE" id="PS00845">
    <property type="entry name" value="CAP_GLY_1"/>
    <property type="match status" value="2"/>
</dbReference>
<dbReference type="PROSITE" id="PS50245">
    <property type="entry name" value="CAP_GLY_2"/>
    <property type="match status" value="2"/>
</dbReference>
<gene>
    <name type="primary">Clip2</name>
    <name type="synonym">Cyln2</name>
</gene>
<organism>
    <name type="scientific">Rattus norvegicus</name>
    <name type="common">Rat</name>
    <dbReference type="NCBI Taxonomy" id="10116"/>
    <lineage>
        <taxon>Eukaryota</taxon>
        <taxon>Metazoa</taxon>
        <taxon>Chordata</taxon>
        <taxon>Craniata</taxon>
        <taxon>Vertebrata</taxon>
        <taxon>Euteleostomi</taxon>
        <taxon>Mammalia</taxon>
        <taxon>Eutheria</taxon>
        <taxon>Euarchontoglires</taxon>
        <taxon>Glires</taxon>
        <taxon>Rodentia</taxon>
        <taxon>Myomorpha</taxon>
        <taxon>Muroidea</taxon>
        <taxon>Muridae</taxon>
        <taxon>Murinae</taxon>
        <taxon>Rattus</taxon>
    </lineage>
</organism>
<proteinExistence type="evidence at protein level"/>
<name>CLIP2_RAT</name>
<protein>
    <recommendedName>
        <fullName>CAP-Gly domain-containing linker protein 2</fullName>
    </recommendedName>
    <alternativeName>
        <fullName>Cytoplasmic linker protein 115</fullName>
        <shortName>CLIP-115</shortName>
    </alternativeName>
    <alternativeName>
        <fullName>Cytoplasmic linker protein 2</fullName>
    </alternativeName>
</protein>
<keyword id="KW-0175">Coiled coil</keyword>
<keyword id="KW-0963">Cytoplasm</keyword>
<keyword id="KW-0206">Cytoskeleton</keyword>
<keyword id="KW-0493">Microtubule</keyword>
<keyword id="KW-0597">Phosphoprotein</keyword>
<keyword id="KW-1185">Reference proteome</keyword>
<keyword id="KW-0677">Repeat</keyword>
<feature type="chain" id="PRO_0000083517" description="CAP-Gly domain-containing linker protein 2">
    <location>
        <begin position="1"/>
        <end position="1046"/>
    </location>
</feature>
<feature type="domain" description="CAP-Gly 1" evidence="3">
    <location>
        <begin position="100"/>
        <end position="142"/>
    </location>
</feature>
<feature type="domain" description="CAP-Gly 2" evidence="3">
    <location>
        <begin position="240"/>
        <end position="282"/>
    </location>
</feature>
<feature type="region of interest" description="Disordered" evidence="4">
    <location>
        <begin position="1"/>
        <end position="72"/>
    </location>
</feature>
<feature type="region of interest" description="Disordered" evidence="4">
    <location>
        <begin position="196"/>
        <end position="216"/>
    </location>
</feature>
<feature type="region of interest" description="Disordered" evidence="4">
    <location>
        <begin position="314"/>
        <end position="340"/>
    </location>
</feature>
<feature type="region of interest" description="Disordered" evidence="4">
    <location>
        <begin position="1021"/>
        <end position="1046"/>
    </location>
</feature>
<feature type="coiled-coil region" evidence="2">
    <location>
        <begin position="355"/>
        <end position="525"/>
    </location>
</feature>
<feature type="coiled-coil region" evidence="2">
    <location>
        <begin position="564"/>
        <end position="637"/>
    </location>
</feature>
<feature type="coiled-coil region" evidence="2">
    <location>
        <begin position="675"/>
        <end position="966"/>
    </location>
</feature>
<feature type="coiled-coil region" evidence="2">
    <location>
        <begin position="994"/>
        <end position="1014"/>
    </location>
</feature>
<feature type="compositionally biased region" description="Low complexity" evidence="4">
    <location>
        <begin position="26"/>
        <end position="39"/>
    </location>
</feature>
<feature type="compositionally biased region" description="Polar residues" evidence="4">
    <location>
        <begin position="50"/>
        <end position="62"/>
    </location>
</feature>
<feature type="compositionally biased region" description="Polar residues" evidence="4">
    <location>
        <begin position="196"/>
        <end position="211"/>
    </location>
</feature>
<feature type="compositionally biased region" description="Low complexity" evidence="4">
    <location>
        <begin position="315"/>
        <end position="339"/>
    </location>
</feature>
<feature type="compositionally biased region" description="Polar residues" evidence="4">
    <location>
        <begin position="1021"/>
        <end position="1032"/>
    </location>
</feature>
<feature type="compositionally biased region" description="Basic and acidic residues" evidence="4">
    <location>
        <begin position="1035"/>
        <end position="1046"/>
    </location>
</feature>
<feature type="modified residue" description="Phosphoserine" evidence="1">
    <location>
        <position position="50"/>
    </location>
</feature>
<feature type="modified residue" description="Phosphoserine" evidence="6">
    <location>
        <position position="203"/>
    </location>
</feature>
<feature type="modified residue" description="Phosphoserine" evidence="6">
    <location>
        <position position="208"/>
    </location>
</feature>
<feature type="modified residue" description="Phosphoserine" evidence="1">
    <location>
        <position position="212"/>
    </location>
</feature>
<feature type="modified residue" description="Phosphoserine" evidence="1">
    <location>
        <position position="315"/>
    </location>
</feature>
<feature type="modified residue" description="Phosphoserine" evidence="6">
    <location>
        <position position="923"/>
    </location>
</feature>
<feature type="modified residue" description="Phosphoserine" evidence="1">
    <location>
        <position position="973"/>
    </location>
</feature>
<feature type="modified residue" description="Phosphoserine" evidence="1">
    <location>
        <position position="979"/>
    </location>
</feature>
<reference key="1">
    <citation type="journal article" date="1997" name="Neuron">
        <title>CLIP-115, a novel brain specific cytoplasmic linker protein, mediates the localisation of dendritic lamellar bodies.</title>
        <authorList>
            <person name="de Zeeuw C.I."/>
            <person name="Hoogenraad C.C."/>
            <person name="Goedknegt E."/>
            <person name="Hertzberg E."/>
            <person name="Neubauer A."/>
            <person name="Grosveld F.G."/>
            <person name="Galjart N.J."/>
        </authorList>
    </citation>
    <scope>NUCLEOTIDE SEQUENCE [MRNA]</scope>
    <scope>FUNCTION</scope>
    <scope>SUBCELLULAR LOCATION</scope>
    <scope>TISSUE SPECIFICITY</scope>
</reference>
<reference key="2">
    <citation type="journal article" date="2012" name="Nat. Commun.">
        <title>Quantitative maps of protein phosphorylation sites across 14 different rat organs and tissues.</title>
        <authorList>
            <person name="Lundby A."/>
            <person name="Secher A."/>
            <person name="Lage K."/>
            <person name="Nordsborg N.B."/>
            <person name="Dmytriyev A."/>
            <person name="Lundby C."/>
            <person name="Olsen J.V."/>
        </authorList>
    </citation>
    <scope>PHOSPHORYLATION [LARGE SCALE ANALYSIS] AT SER-203; SER-208 AND SER-923</scope>
    <scope>IDENTIFICATION BY MASS SPECTROMETRY [LARGE SCALE ANALYSIS]</scope>
</reference>
<accession>O55156</accession>
<evidence type="ECO:0000250" key="1">
    <source>
        <dbReference type="UniProtKB" id="Q9Z0H8"/>
    </source>
</evidence>
<evidence type="ECO:0000255" key="2"/>
<evidence type="ECO:0000255" key="3">
    <source>
        <dbReference type="PROSITE-ProRule" id="PRU00045"/>
    </source>
</evidence>
<evidence type="ECO:0000256" key="4">
    <source>
        <dbReference type="SAM" id="MobiDB-lite"/>
    </source>
</evidence>
<evidence type="ECO:0000269" key="5">
    <source>
    </source>
</evidence>
<evidence type="ECO:0007744" key="6">
    <source>
    </source>
</evidence>
<sequence length="1046" mass="115480">MQKPSGLKPPGRGGKHSSPVGRPSIGSASSSVVASASGSKEGSPLHKQASGPSSAGATTTVSEKPGPKAAEVGDDFLGDFVVGERVWVNGVKPGVVQYLGETQFAPGQWAGVVLDDPVGKNDGAVGGLRYFECPALQGIFTRPSKLTRQPAAEGSGSDGHSVESLTAQNLSLHSGTATPPLTGRVIPLRESVLNSSVKTGNESGSNLSDSGSVKRGDKDLHLGDRVLVGGTKTGVVRYVGETDFAKGEWCGVELDEPLGKNDGAVAGTRYFQCPPKFGLFAPIHKVIRIGFPSTSPAKAKKTKRMAMGVSALTHSPSSSSISSVSSVASSVGGRPSRSGLLTETSSRYARKISGTTALQEALKEKQQHIEQLLAERDLERAEVAKATSHICEVEKEIALLKAQHEQYVAEAEEKLQRARLLVENVRKEKVDLSNQLEEERRKVEDLQFRVEEESITKGDLETQTQLEHARIGELEQSLLLEKAQAERLLRELADNRLTTVAEKSRVLQLEEELSLRRGEIEELQHCLLQSGPPPADHPEAAETLRLRERLLSASKEHQRDSTLLQDKYEHMLKTYQTEVDKLRAANEKYAQEVADLKAKVQQATTENMGLMDNWKSKLDSLASDHQKSLEDLKATLNSGPGAQQKEIGELKALVEGIKMEHQLELGNLQAKHDLETAMHGKEKEGLRQKLQEAQEELAGLQQHWRAQLEEQAAAPAELQEAQDQCRDAQLRVQELEGLDVEYRGQAQAIEFLKEQISLAEKKMLDYEMLQRAEAQSRQEAERLREKLLVAENRLQAVESLCSAQHSHVIESNDLSEEKIRMKETVEGLQDKLNKRDKEVAALTSQMDMLRAQVSALENKCKSGEKKIDSLLKEKRRLEAELEAVSRKTHDASGQLVHISQELLRKERSLNELRVLLLEANRHSPGPERDLSREVHKAEWRIKEQKLKDDIRGLREKLTGLDKEKSLSEQKRYSLIDPASAPELLRLQHQLVSTEGCLRDALDQAQQVERLVEALRGCSDRTQTISNSGSANGIHQPDKAHKQEDKH</sequence>